<protein>
    <recommendedName>
        <fullName evidence="1">Histidine--tRNA ligase</fullName>
        <ecNumber evidence="1">6.1.1.21</ecNumber>
    </recommendedName>
    <alternativeName>
        <fullName evidence="1">Histidyl-tRNA synthetase</fullName>
        <shortName evidence="1">HisRS</shortName>
    </alternativeName>
</protein>
<organism>
    <name type="scientific">Methanoregula boonei (strain DSM 21154 / JCM 14090 / 6A8)</name>
    <dbReference type="NCBI Taxonomy" id="456442"/>
    <lineage>
        <taxon>Archaea</taxon>
        <taxon>Methanobacteriati</taxon>
        <taxon>Methanobacteriota</taxon>
        <taxon>Stenosarchaea group</taxon>
        <taxon>Methanomicrobia</taxon>
        <taxon>Methanomicrobiales</taxon>
        <taxon>Methanoregulaceae</taxon>
        <taxon>Methanoregula</taxon>
    </lineage>
</organism>
<evidence type="ECO:0000255" key="1">
    <source>
        <dbReference type="HAMAP-Rule" id="MF_00127"/>
    </source>
</evidence>
<reference key="1">
    <citation type="journal article" date="2015" name="Microbiology">
        <title>Genome of Methanoregula boonei 6A8 reveals adaptations to oligotrophic peatland environments.</title>
        <authorList>
            <person name="Braeuer S."/>
            <person name="Cadillo-Quiroz H."/>
            <person name="Kyrpides N."/>
            <person name="Woyke T."/>
            <person name="Goodwin L."/>
            <person name="Detter C."/>
            <person name="Podell S."/>
            <person name="Yavitt J.B."/>
            <person name="Zinder S.H."/>
        </authorList>
    </citation>
    <scope>NUCLEOTIDE SEQUENCE [LARGE SCALE GENOMIC DNA]</scope>
    <source>
        <strain>DSM 21154 / JCM 14090 / 6A8</strain>
    </source>
</reference>
<accession>A7I940</accession>
<sequence length="410" mass="45048">MIQKPRGTRDFLPDEMEARRSIEAKMREAVRRFGYREVCTPEFEELELFTLRSGEGIMQEMYVFEDKGGRKLALRPEITAAVIRMYINEAKVAPKPLRWCYFADCFRYERPQKGRYRQFWQFGAELIGADTALADAEVIMLAAEALNATGVTWELKVGHLAFMKNLLADLDPAAQRRVMAHLDKKDFEGLAETLAGMRKSGLNDSLTALVECRTLAEAFEIAGTIPEKERVEQTMGILDASGVRYSLNFGIARGLDYYTGMVFEGFAENLGAENQILGGGAYRLAHLFGGDDVASCGFAIGFDRVMVSLGEVFAAKDTIAGIVCTDEGRSFALSVAREFRAAGIRAEMDLMGRGLGAQLAHASKTADFAVVIGKREADAGQVTLKNLHSGEQKTLDPAAAIAEVKAHGAR</sequence>
<feature type="chain" id="PRO_1000016387" description="Histidine--tRNA ligase">
    <location>
        <begin position="1"/>
        <end position="410"/>
    </location>
</feature>
<name>SYH_METB6</name>
<comment type="catalytic activity">
    <reaction evidence="1">
        <text>tRNA(His) + L-histidine + ATP = L-histidyl-tRNA(His) + AMP + diphosphate + H(+)</text>
        <dbReference type="Rhea" id="RHEA:17313"/>
        <dbReference type="Rhea" id="RHEA-COMP:9665"/>
        <dbReference type="Rhea" id="RHEA-COMP:9689"/>
        <dbReference type="ChEBI" id="CHEBI:15378"/>
        <dbReference type="ChEBI" id="CHEBI:30616"/>
        <dbReference type="ChEBI" id="CHEBI:33019"/>
        <dbReference type="ChEBI" id="CHEBI:57595"/>
        <dbReference type="ChEBI" id="CHEBI:78442"/>
        <dbReference type="ChEBI" id="CHEBI:78527"/>
        <dbReference type="ChEBI" id="CHEBI:456215"/>
        <dbReference type="EC" id="6.1.1.21"/>
    </reaction>
</comment>
<comment type="subcellular location">
    <subcellularLocation>
        <location evidence="1">Cytoplasm</location>
    </subcellularLocation>
</comment>
<comment type="similarity">
    <text evidence="1">Belongs to the class-II aminoacyl-tRNA synthetase family.</text>
</comment>
<gene>
    <name evidence="1" type="primary">hisS</name>
    <name type="ordered locus">Mboo_1734</name>
</gene>
<proteinExistence type="inferred from homology"/>
<keyword id="KW-0030">Aminoacyl-tRNA synthetase</keyword>
<keyword id="KW-0067">ATP-binding</keyword>
<keyword id="KW-0963">Cytoplasm</keyword>
<keyword id="KW-0436">Ligase</keyword>
<keyword id="KW-0547">Nucleotide-binding</keyword>
<keyword id="KW-0648">Protein biosynthesis</keyword>
<keyword id="KW-1185">Reference proteome</keyword>
<dbReference type="EC" id="6.1.1.21" evidence="1"/>
<dbReference type="EMBL" id="CP000780">
    <property type="protein sequence ID" value="ABS56251.1"/>
    <property type="molecule type" value="Genomic_DNA"/>
</dbReference>
<dbReference type="RefSeq" id="WP_012107299.1">
    <property type="nucleotide sequence ID" value="NC_009712.1"/>
</dbReference>
<dbReference type="SMR" id="A7I940"/>
<dbReference type="STRING" id="456442.Mboo_1734"/>
<dbReference type="GeneID" id="5411966"/>
<dbReference type="KEGG" id="mbn:Mboo_1734"/>
<dbReference type="eggNOG" id="arCOG00404">
    <property type="taxonomic scope" value="Archaea"/>
</dbReference>
<dbReference type="HOGENOM" id="CLU_025113_3_1_2"/>
<dbReference type="OrthoDB" id="8659at2157"/>
<dbReference type="Proteomes" id="UP000002408">
    <property type="component" value="Chromosome"/>
</dbReference>
<dbReference type="GO" id="GO:0005737">
    <property type="term" value="C:cytoplasm"/>
    <property type="evidence" value="ECO:0007669"/>
    <property type="project" value="UniProtKB-SubCell"/>
</dbReference>
<dbReference type="GO" id="GO:0005524">
    <property type="term" value="F:ATP binding"/>
    <property type="evidence" value="ECO:0007669"/>
    <property type="project" value="UniProtKB-UniRule"/>
</dbReference>
<dbReference type="GO" id="GO:0004821">
    <property type="term" value="F:histidine-tRNA ligase activity"/>
    <property type="evidence" value="ECO:0007669"/>
    <property type="project" value="UniProtKB-UniRule"/>
</dbReference>
<dbReference type="GO" id="GO:0006427">
    <property type="term" value="P:histidyl-tRNA aminoacylation"/>
    <property type="evidence" value="ECO:0007669"/>
    <property type="project" value="UniProtKB-UniRule"/>
</dbReference>
<dbReference type="GO" id="GO:0000105">
    <property type="term" value="P:L-histidine biosynthetic process"/>
    <property type="evidence" value="ECO:0007669"/>
    <property type="project" value="InterPro"/>
</dbReference>
<dbReference type="CDD" id="cd00773">
    <property type="entry name" value="HisRS-like_core"/>
    <property type="match status" value="1"/>
</dbReference>
<dbReference type="CDD" id="cd00859">
    <property type="entry name" value="HisRS_anticodon"/>
    <property type="match status" value="1"/>
</dbReference>
<dbReference type="Gene3D" id="3.40.50.800">
    <property type="entry name" value="Anticodon-binding domain"/>
    <property type="match status" value="1"/>
</dbReference>
<dbReference type="Gene3D" id="3.30.930.10">
    <property type="entry name" value="Bira Bifunctional Protein, Domain 2"/>
    <property type="match status" value="1"/>
</dbReference>
<dbReference type="HAMAP" id="MF_00127">
    <property type="entry name" value="His_tRNA_synth"/>
    <property type="match status" value="1"/>
</dbReference>
<dbReference type="HAMAP" id="MF_00125">
    <property type="entry name" value="HisZ"/>
    <property type="match status" value="1"/>
</dbReference>
<dbReference type="InterPro" id="IPR006195">
    <property type="entry name" value="aa-tRNA-synth_II"/>
</dbReference>
<dbReference type="InterPro" id="IPR045864">
    <property type="entry name" value="aa-tRNA-synth_II/BPL/LPL"/>
</dbReference>
<dbReference type="InterPro" id="IPR004154">
    <property type="entry name" value="Anticodon-bd"/>
</dbReference>
<dbReference type="InterPro" id="IPR036621">
    <property type="entry name" value="Anticodon-bd_dom_sf"/>
</dbReference>
<dbReference type="InterPro" id="IPR015807">
    <property type="entry name" value="His-tRNA-ligase"/>
</dbReference>
<dbReference type="InterPro" id="IPR041715">
    <property type="entry name" value="HisRS-like_core"/>
</dbReference>
<dbReference type="InterPro" id="IPR004516">
    <property type="entry name" value="HisRS/HisZ"/>
</dbReference>
<dbReference type="InterPro" id="IPR033656">
    <property type="entry name" value="HisRS_anticodon"/>
</dbReference>
<dbReference type="InterPro" id="IPR004517">
    <property type="entry name" value="HisZ"/>
</dbReference>
<dbReference type="NCBIfam" id="TIGR00442">
    <property type="entry name" value="hisS"/>
    <property type="match status" value="1"/>
</dbReference>
<dbReference type="PANTHER" id="PTHR43707:SF1">
    <property type="entry name" value="HISTIDINE--TRNA LIGASE, MITOCHONDRIAL-RELATED"/>
    <property type="match status" value="1"/>
</dbReference>
<dbReference type="PANTHER" id="PTHR43707">
    <property type="entry name" value="HISTIDYL-TRNA SYNTHETASE"/>
    <property type="match status" value="1"/>
</dbReference>
<dbReference type="Pfam" id="PF03129">
    <property type="entry name" value="HGTP_anticodon"/>
    <property type="match status" value="1"/>
</dbReference>
<dbReference type="Pfam" id="PF13393">
    <property type="entry name" value="tRNA-synt_His"/>
    <property type="match status" value="1"/>
</dbReference>
<dbReference type="PIRSF" id="PIRSF001549">
    <property type="entry name" value="His-tRNA_synth"/>
    <property type="match status" value="1"/>
</dbReference>
<dbReference type="SUPFAM" id="SSF52954">
    <property type="entry name" value="Class II aaRS ABD-related"/>
    <property type="match status" value="1"/>
</dbReference>
<dbReference type="SUPFAM" id="SSF55681">
    <property type="entry name" value="Class II aaRS and biotin synthetases"/>
    <property type="match status" value="1"/>
</dbReference>
<dbReference type="PROSITE" id="PS50862">
    <property type="entry name" value="AA_TRNA_LIGASE_II"/>
    <property type="match status" value="1"/>
</dbReference>